<feature type="chain" id="PRO_0000262390" description="N-succinylglutamate 5-semialdehyde dehydrogenase">
    <location>
        <begin position="1"/>
        <end position="487"/>
    </location>
</feature>
<feature type="active site" evidence="1">
    <location>
        <position position="244"/>
    </location>
</feature>
<feature type="active site" evidence="1">
    <location>
        <position position="278"/>
    </location>
</feature>
<feature type="binding site" evidence="1">
    <location>
        <begin position="221"/>
        <end position="226"/>
    </location>
    <ligand>
        <name>NAD(+)</name>
        <dbReference type="ChEBI" id="CHEBI:57540"/>
    </ligand>
</feature>
<organism>
    <name type="scientific">Burkholderia pseudomallei (strain 1710b)</name>
    <dbReference type="NCBI Taxonomy" id="320372"/>
    <lineage>
        <taxon>Bacteria</taxon>
        <taxon>Pseudomonadati</taxon>
        <taxon>Pseudomonadota</taxon>
        <taxon>Betaproteobacteria</taxon>
        <taxon>Burkholderiales</taxon>
        <taxon>Burkholderiaceae</taxon>
        <taxon>Burkholderia</taxon>
        <taxon>pseudomallei group</taxon>
    </lineage>
</organism>
<name>ASTD_BURP1</name>
<gene>
    <name evidence="1" type="primary">astD</name>
    <name type="ordered locus">BURPS1710b_2843</name>
</gene>
<sequence length="487" mass="51839">MTELFIDGAWRDGAGPVFASRNPGTGEPVWEGAGASADDVERAVASARRAFAAWSALDLDARCAIVKRFAALLVERKEALATMIGRETGKPLWEARTEVASMAAKVDVSIAAYHERTGERRSPTADGVAVLRHRPHGVVAVFGPYNFPGHLPNGHIVPALIAGNTVVFKPSELAPGVARATVEIWRDAGLPAGVLNLVQGEKDTGVALANHRQIDGLFFTGSSDTGTLLHRQFGGRPEIVLALEMGGNNPLVVADVEDIDAAVHHAIQSAFLSAGQRCTCARRILVPRGAFGDRFLERFADVASRITADVYDADPQPFMGAVISARAASRLVAAQAKLLELGAAPIIEMRQRDPALGFVNASILDVTPVRELPDEEHFGPLAQIVRYTDLDDAIARANDTAFGLSAGLLADDETVWNTFRRAIRAGIVNWNRPTNGASSAAPFGGAGRSGNHRPSAYYAADYCAYPMASVESAQLQMPANLSPGLHF</sequence>
<dbReference type="EC" id="1.2.1.71" evidence="1"/>
<dbReference type="EMBL" id="CP000124">
    <property type="protein sequence ID" value="ABA50055.1"/>
    <property type="molecule type" value="Genomic_DNA"/>
</dbReference>
<dbReference type="RefSeq" id="WP_004527437.1">
    <property type="nucleotide sequence ID" value="NC_007434.1"/>
</dbReference>
<dbReference type="SMR" id="Q3JQC6"/>
<dbReference type="EnsemblBacteria" id="ABA50055">
    <property type="protein sequence ID" value="ABA50055"/>
    <property type="gene ID" value="BURPS1710b_2843"/>
</dbReference>
<dbReference type="KEGG" id="bpm:BURPS1710b_2843"/>
<dbReference type="HOGENOM" id="CLU_005391_1_0_4"/>
<dbReference type="UniPathway" id="UPA00185">
    <property type="reaction ID" value="UER00282"/>
</dbReference>
<dbReference type="Proteomes" id="UP000002700">
    <property type="component" value="Chromosome I"/>
</dbReference>
<dbReference type="GO" id="GO:0043824">
    <property type="term" value="F:succinylglutamate-semialdehyde dehydrogenase activity"/>
    <property type="evidence" value="ECO:0007669"/>
    <property type="project" value="UniProtKB-EC"/>
</dbReference>
<dbReference type="GO" id="GO:0019544">
    <property type="term" value="P:arginine catabolic process to glutamate"/>
    <property type="evidence" value="ECO:0007669"/>
    <property type="project" value="UniProtKB-UniRule"/>
</dbReference>
<dbReference type="GO" id="GO:0019545">
    <property type="term" value="P:arginine catabolic process to succinate"/>
    <property type="evidence" value="ECO:0007669"/>
    <property type="project" value="UniProtKB-UniRule"/>
</dbReference>
<dbReference type="CDD" id="cd07095">
    <property type="entry name" value="ALDH_SGSD_AstD"/>
    <property type="match status" value="1"/>
</dbReference>
<dbReference type="FunFam" id="3.40.605.10:FF:000010">
    <property type="entry name" value="N-succinylglutamate 5-semialdehyde dehydrogenase"/>
    <property type="match status" value="1"/>
</dbReference>
<dbReference type="Gene3D" id="3.40.605.10">
    <property type="entry name" value="Aldehyde Dehydrogenase, Chain A, domain 1"/>
    <property type="match status" value="1"/>
</dbReference>
<dbReference type="Gene3D" id="3.40.309.10">
    <property type="entry name" value="Aldehyde Dehydrogenase, Chain A, domain 2"/>
    <property type="match status" value="1"/>
</dbReference>
<dbReference type="HAMAP" id="MF_01174">
    <property type="entry name" value="Aldedh_AstD"/>
    <property type="match status" value="1"/>
</dbReference>
<dbReference type="InterPro" id="IPR016161">
    <property type="entry name" value="Ald_DH/histidinol_DH"/>
</dbReference>
<dbReference type="InterPro" id="IPR016163">
    <property type="entry name" value="Ald_DH_C"/>
</dbReference>
<dbReference type="InterPro" id="IPR016160">
    <property type="entry name" value="Ald_DH_CS_CYS"/>
</dbReference>
<dbReference type="InterPro" id="IPR029510">
    <property type="entry name" value="Ald_DH_CS_GLU"/>
</dbReference>
<dbReference type="InterPro" id="IPR016162">
    <property type="entry name" value="Ald_DH_N"/>
</dbReference>
<dbReference type="InterPro" id="IPR015590">
    <property type="entry name" value="Aldehyde_DH_dom"/>
</dbReference>
<dbReference type="InterPro" id="IPR017649">
    <property type="entry name" value="SuccinylGlu_semiald_DH_AstD"/>
</dbReference>
<dbReference type="NCBIfam" id="TIGR03240">
    <property type="entry name" value="arg_catab_astD"/>
    <property type="match status" value="1"/>
</dbReference>
<dbReference type="NCBIfam" id="NF006992">
    <property type="entry name" value="PRK09457.1"/>
    <property type="match status" value="1"/>
</dbReference>
<dbReference type="PANTHER" id="PTHR11699">
    <property type="entry name" value="ALDEHYDE DEHYDROGENASE-RELATED"/>
    <property type="match status" value="1"/>
</dbReference>
<dbReference type="Pfam" id="PF00171">
    <property type="entry name" value="Aldedh"/>
    <property type="match status" value="1"/>
</dbReference>
<dbReference type="SUPFAM" id="SSF53720">
    <property type="entry name" value="ALDH-like"/>
    <property type="match status" value="1"/>
</dbReference>
<dbReference type="PROSITE" id="PS00070">
    <property type="entry name" value="ALDEHYDE_DEHYDR_CYS"/>
    <property type="match status" value="1"/>
</dbReference>
<dbReference type="PROSITE" id="PS00687">
    <property type="entry name" value="ALDEHYDE_DEHYDR_GLU"/>
    <property type="match status" value="1"/>
</dbReference>
<reference key="1">
    <citation type="journal article" date="2010" name="Genome Biol. Evol.">
        <title>Continuing evolution of Burkholderia mallei through genome reduction and large-scale rearrangements.</title>
        <authorList>
            <person name="Losada L."/>
            <person name="Ronning C.M."/>
            <person name="DeShazer D."/>
            <person name="Woods D."/>
            <person name="Fedorova N."/>
            <person name="Kim H.S."/>
            <person name="Shabalina S.A."/>
            <person name="Pearson T.R."/>
            <person name="Brinkac L."/>
            <person name="Tan P."/>
            <person name="Nandi T."/>
            <person name="Crabtree J."/>
            <person name="Badger J."/>
            <person name="Beckstrom-Sternberg S."/>
            <person name="Saqib M."/>
            <person name="Schutzer S.E."/>
            <person name="Keim P."/>
            <person name="Nierman W.C."/>
        </authorList>
    </citation>
    <scope>NUCLEOTIDE SEQUENCE [LARGE SCALE GENOMIC DNA]</scope>
    <source>
        <strain>1710b</strain>
    </source>
</reference>
<evidence type="ECO:0000255" key="1">
    <source>
        <dbReference type="HAMAP-Rule" id="MF_01174"/>
    </source>
</evidence>
<protein>
    <recommendedName>
        <fullName evidence="1">N-succinylglutamate 5-semialdehyde dehydrogenase</fullName>
        <ecNumber evidence="1">1.2.1.71</ecNumber>
    </recommendedName>
    <alternativeName>
        <fullName evidence="1">Succinylglutamic semialdehyde dehydrogenase</fullName>
        <shortName evidence="1">SGSD</shortName>
    </alternativeName>
</protein>
<comment type="function">
    <text evidence="1">Catalyzes the NAD-dependent reduction of succinylglutamate semialdehyde into succinylglutamate.</text>
</comment>
<comment type="catalytic activity">
    <reaction evidence="1">
        <text>N-succinyl-L-glutamate 5-semialdehyde + NAD(+) + H2O = N-succinyl-L-glutamate + NADH + 2 H(+)</text>
        <dbReference type="Rhea" id="RHEA:10812"/>
        <dbReference type="ChEBI" id="CHEBI:15377"/>
        <dbReference type="ChEBI" id="CHEBI:15378"/>
        <dbReference type="ChEBI" id="CHEBI:57540"/>
        <dbReference type="ChEBI" id="CHEBI:57945"/>
        <dbReference type="ChEBI" id="CHEBI:58520"/>
        <dbReference type="ChEBI" id="CHEBI:58763"/>
        <dbReference type="EC" id="1.2.1.71"/>
    </reaction>
</comment>
<comment type="pathway">
    <text evidence="1">Amino-acid degradation; L-arginine degradation via AST pathway; L-glutamate and succinate from L-arginine: step 4/5.</text>
</comment>
<comment type="similarity">
    <text evidence="1">Belongs to the aldehyde dehydrogenase family. AstD subfamily.</text>
</comment>
<accession>Q3JQC6</accession>
<proteinExistence type="inferred from homology"/>
<keyword id="KW-0056">Arginine metabolism</keyword>
<keyword id="KW-0520">NAD</keyword>
<keyword id="KW-0560">Oxidoreductase</keyword>